<protein>
    <recommendedName>
        <fullName evidence="1">DNA replication and repair protein RecF</fullName>
    </recommendedName>
</protein>
<evidence type="ECO:0000255" key="1">
    <source>
        <dbReference type="HAMAP-Rule" id="MF_00365"/>
    </source>
</evidence>
<comment type="function">
    <text evidence="1">The RecF protein is involved in DNA metabolism; it is required for DNA replication and normal SOS inducibility. RecF binds preferentially to single-stranded, linear DNA. It also seems to bind ATP.</text>
</comment>
<comment type="subcellular location">
    <subcellularLocation>
        <location evidence="1">Cytoplasm</location>
    </subcellularLocation>
</comment>
<comment type="similarity">
    <text evidence="1">Belongs to the RecF family.</text>
</comment>
<dbReference type="EMBL" id="CP000233">
    <property type="protein sequence ID" value="ABD98827.1"/>
    <property type="molecule type" value="Genomic_DNA"/>
</dbReference>
<dbReference type="RefSeq" id="WP_011475454.1">
    <property type="nucleotide sequence ID" value="NC_007929.1"/>
</dbReference>
<dbReference type="RefSeq" id="YP_534910.1">
    <property type="nucleotide sequence ID" value="NC_007929.1"/>
</dbReference>
<dbReference type="SMR" id="Q1WVP2"/>
<dbReference type="STRING" id="362948.LSL_0004"/>
<dbReference type="KEGG" id="lsl:LSL_0004"/>
<dbReference type="PATRIC" id="fig|362948.14.peg.75"/>
<dbReference type="HOGENOM" id="CLU_040267_0_1_9"/>
<dbReference type="OrthoDB" id="9803889at2"/>
<dbReference type="Proteomes" id="UP000006559">
    <property type="component" value="Chromosome"/>
</dbReference>
<dbReference type="GO" id="GO:0005737">
    <property type="term" value="C:cytoplasm"/>
    <property type="evidence" value="ECO:0007669"/>
    <property type="project" value="UniProtKB-SubCell"/>
</dbReference>
<dbReference type="GO" id="GO:0005524">
    <property type="term" value="F:ATP binding"/>
    <property type="evidence" value="ECO:0007669"/>
    <property type="project" value="UniProtKB-UniRule"/>
</dbReference>
<dbReference type="GO" id="GO:0003697">
    <property type="term" value="F:single-stranded DNA binding"/>
    <property type="evidence" value="ECO:0007669"/>
    <property type="project" value="UniProtKB-UniRule"/>
</dbReference>
<dbReference type="GO" id="GO:0006260">
    <property type="term" value="P:DNA replication"/>
    <property type="evidence" value="ECO:0007669"/>
    <property type="project" value="UniProtKB-UniRule"/>
</dbReference>
<dbReference type="GO" id="GO:0000731">
    <property type="term" value="P:DNA synthesis involved in DNA repair"/>
    <property type="evidence" value="ECO:0007669"/>
    <property type="project" value="TreeGrafter"/>
</dbReference>
<dbReference type="GO" id="GO:0006302">
    <property type="term" value="P:double-strand break repair"/>
    <property type="evidence" value="ECO:0007669"/>
    <property type="project" value="TreeGrafter"/>
</dbReference>
<dbReference type="GO" id="GO:0009432">
    <property type="term" value="P:SOS response"/>
    <property type="evidence" value="ECO:0007669"/>
    <property type="project" value="UniProtKB-UniRule"/>
</dbReference>
<dbReference type="CDD" id="cd03242">
    <property type="entry name" value="ABC_RecF"/>
    <property type="match status" value="1"/>
</dbReference>
<dbReference type="FunFam" id="1.20.1050.90:FF:000002">
    <property type="entry name" value="DNA replication and repair protein RecF"/>
    <property type="match status" value="1"/>
</dbReference>
<dbReference type="Gene3D" id="3.40.50.300">
    <property type="entry name" value="P-loop containing nucleotide triphosphate hydrolases"/>
    <property type="match status" value="1"/>
</dbReference>
<dbReference type="Gene3D" id="1.20.1050.90">
    <property type="entry name" value="RecF/RecN/SMC, N-terminal domain"/>
    <property type="match status" value="1"/>
</dbReference>
<dbReference type="HAMAP" id="MF_00365">
    <property type="entry name" value="RecF"/>
    <property type="match status" value="1"/>
</dbReference>
<dbReference type="InterPro" id="IPR001238">
    <property type="entry name" value="DNA-binding_RecF"/>
</dbReference>
<dbReference type="InterPro" id="IPR018078">
    <property type="entry name" value="DNA-binding_RecF_CS"/>
</dbReference>
<dbReference type="InterPro" id="IPR027417">
    <property type="entry name" value="P-loop_NTPase"/>
</dbReference>
<dbReference type="InterPro" id="IPR003395">
    <property type="entry name" value="RecF/RecN/SMC_N"/>
</dbReference>
<dbReference type="InterPro" id="IPR042174">
    <property type="entry name" value="RecF_2"/>
</dbReference>
<dbReference type="NCBIfam" id="TIGR00611">
    <property type="entry name" value="recf"/>
    <property type="match status" value="1"/>
</dbReference>
<dbReference type="PANTHER" id="PTHR32182">
    <property type="entry name" value="DNA REPLICATION AND REPAIR PROTEIN RECF"/>
    <property type="match status" value="1"/>
</dbReference>
<dbReference type="PANTHER" id="PTHR32182:SF0">
    <property type="entry name" value="DNA REPLICATION AND REPAIR PROTEIN RECF"/>
    <property type="match status" value="1"/>
</dbReference>
<dbReference type="Pfam" id="PF02463">
    <property type="entry name" value="SMC_N"/>
    <property type="match status" value="1"/>
</dbReference>
<dbReference type="SUPFAM" id="SSF52540">
    <property type="entry name" value="P-loop containing nucleoside triphosphate hydrolases"/>
    <property type="match status" value="1"/>
</dbReference>
<dbReference type="PROSITE" id="PS00617">
    <property type="entry name" value="RECF_1"/>
    <property type="match status" value="1"/>
</dbReference>
<dbReference type="PROSITE" id="PS00618">
    <property type="entry name" value="RECF_2"/>
    <property type="match status" value="1"/>
</dbReference>
<accession>Q1WVP2</accession>
<gene>
    <name evidence="1" type="primary">recF</name>
    <name type="ordered locus">LSL_0004</name>
</gene>
<proteinExistence type="inferred from homology"/>
<name>RECF_LIGS1</name>
<feature type="chain" id="PRO_1000048536" description="DNA replication and repair protein RecF">
    <location>
        <begin position="1"/>
        <end position="379"/>
    </location>
</feature>
<feature type="binding site" evidence="1">
    <location>
        <begin position="30"/>
        <end position="37"/>
    </location>
    <ligand>
        <name>ATP</name>
        <dbReference type="ChEBI" id="CHEBI:30616"/>
    </ligand>
</feature>
<reference key="1">
    <citation type="journal article" date="2006" name="Proc. Natl. Acad. Sci. U.S.A.">
        <title>Multireplicon genome architecture of Lactobacillus salivarius.</title>
        <authorList>
            <person name="Claesson M.J."/>
            <person name="Li Y."/>
            <person name="Leahy S."/>
            <person name="Canchaya C."/>
            <person name="van Pijkeren J.P."/>
            <person name="Cerdeno-Tarraga A.M."/>
            <person name="Parkhill J."/>
            <person name="Flynn S."/>
            <person name="O'Sullivan G.C."/>
            <person name="Collins J.K."/>
            <person name="Higgins D."/>
            <person name="Shanahan F."/>
            <person name="Fitzgerald G.F."/>
            <person name="van Sinderen D."/>
            <person name="O'Toole P.W."/>
        </authorList>
    </citation>
    <scope>NUCLEOTIDE SEQUENCE [LARGE SCALE GENOMIC DNA]</scope>
    <source>
        <strain>UCC118</strain>
    </source>
</reference>
<organism>
    <name type="scientific">Ligilactobacillus salivarius (strain UCC118)</name>
    <name type="common">Lactobacillus salivarius</name>
    <dbReference type="NCBI Taxonomy" id="362948"/>
    <lineage>
        <taxon>Bacteria</taxon>
        <taxon>Bacillati</taxon>
        <taxon>Bacillota</taxon>
        <taxon>Bacilli</taxon>
        <taxon>Lactobacillales</taxon>
        <taxon>Lactobacillaceae</taxon>
        <taxon>Ligilactobacillus</taxon>
    </lineage>
</organism>
<keyword id="KW-0067">ATP-binding</keyword>
<keyword id="KW-0963">Cytoplasm</keyword>
<keyword id="KW-0227">DNA damage</keyword>
<keyword id="KW-0234">DNA repair</keyword>
<keyword id="KW-0235">DNA replication</keyword>
<keyword id="KW-0238">DNA-binding</keyword>
<keyword id="KW-0547">Nucleotide-binding</keyword>
<keyword id="KW-1185">Reference proteome</keyword>
<keyword id="KW-0742">SOS response</keyword>
<sequence>MYLEKLELKHFRNYEDVNVAFSPQVNVLIGKNAQGKTNLLESIYVLAMARSHRTSNDREMVTFKKDAALIRGEVHQRLGNTKLELLISRKGKKAKVNHLEKARLSQYIGQLNVILFAPEDLALVKGAPSVRRRFIDMEFGQIDALYLHTLTEYRAVLRQRNKYLKELQTKKATDKVYLEILSEQLSESGSQIIFKRLEFLQELEKYADKLHNQITQGKEHLQFQYESTLKEYQGKSVLELKQSLIEQYKTMMDKEIFQGTTLLGPHRDDVRFMLNDKNVQVYGSQGQQRTAALSVKLAEIDLMKEKTHEYPILLLDDVLSELDGARQTHLLKTIQNKVQTFLTTPGLSDVAQQLINKPKIFRIDNGKITEENSFTIEEE</sequence>